<protein>
    <recommendedName>
        <fullName>Pirin</fullName>
        <ecNumber evidence="2">1.13.11.24</ecNumber>
    </recommendedName>
    <alternativeName>
        <fullName>Probable quercetin 2,3-dioxygenase PIR</fullName>
        <shortName>Probable quercetinase</shortName>
    </alternativeName>
</protein>
<evidence type="ECO:0000250" key="1"/>
<evidence type="ECO:0000250" key="2">
    <source>
        <dbReference type="UniProtKB" id="O00625"/>
    </source>
</evidence>
<evidence type="ECO:0000269" key="3">
    <source>
    </source>
</evidence>
<evidence type="ECO:0000305" key="4"/>
<dbReference type="EC" id="1.13.11.24" evidence="2"/>
<dbReference type="EMBL" id="AK009757">
    <property type="protein sequence ID" value="BAB26481.1"/>
    <property type="molecule type" value="mRNA"/>
</dbReference>
<dbReference type="EMBL" id="AK138314">
    <property type="protein sequence ID" value="BAE23621.1"/>
    <property type="molecule type" value="mRNA"/>
</dbReference>
<dbReference type="EMBL" id="AK151301">
    <property type="protein sequence ID" value="BAE30284.1"/>
    <property type="molecule type" value="mRNA"/>
</dbReference>
<dbReference type="EMBL" id="AL671706">
    <property type="status" value="NOT_ANNOTATED_CDS"/>
    <property type="molecule type" value="Genomic_DNA"/>
</dbReference>
<dbReference type="EMBL" id="AL732475">
    <property type="status" value="NOT_ANNOTATED_CDS"/>
    <property type="molecule type" value="Genomic_DNA"/>
</dbReference>
<dbReference type="EMBL" id="CH466571">
    <property type="protein sequence ID" value="EDL40759.1"/>
    <property type="molecule type" value="Genomic_DNA"/>
</dbReference>
<dbReference type="EMBL" id="BC024062">
    <property type="protein sequence ID" value="AAH24062.1"/>
    <property type="molecule type" value="mRNA"/>
</dbReference>
<dbReference type="EMBL" id="AF345635">
    <property type="protein sequence ID" value="AAK54068.1"/>
    <property type="molecule type" value="Genomic_DNA"/>
</dbReference>
<dbReference type="CCDS" id="CCDS30520.1"/>
<dbReference type="RefSeq" id="NP_081429.1">
    <property type="nucleotide sequence ID" value="NM_027153.3"/>
</dbReference>
<dbReference type="RefSeq" id="XP_006529040.1">
    <property type="nucleotide sequence ID" value="XM_006528977.3"/>
</dbReference>
<dbReference type="RefSeq" id="XP_036017982.1">
    <property type="nucleotide sequence ID" value="XM_036162089.1"/>
</dbReference>
<dbReference type="SMR" id="Q9D711"/>
<dbReference type="BioGRID" id="213592">
    <property type="interactions" value="1"/>
</dbReference>
<dbReference type="FunCoup" id="Q9D711">
    <property type="interactions" value="1296"/>
</dbReference>
<dbReference type="STRING" id="10090.ENSMUSP00000033749"/>
<dbReference type="iPTMnet" id="Q9D711"/>
<dbReference type="PhosphoSitePlus" id="Q9D711"/>
<dbReference type="jPOST" id="Q9D711"/>
<dbReference type="PaxDb" id="10090-ENSMUSP00000033749"/>
<dbReference type="ProteomicsDB" id="289579"/>
<dbReference type="Pumba" id="Q9D711"/>
<dbReference type="Antibodypedia" id="358">
    <property type="antibodies" value="213 antibodies from 30 providers"/>
</dbReference>
<dbReference type="DNASU" id="69656"/>
<dbReference type="Ensembl" id="ENSMUST00000033749.9">
    <property type="protein sequence ID" value="ENSMUSP00000033749.8"/>
    <property type="gene ID" value="ENSMUSG00000031379.14"/>
</dbReference>
<dbReference type="GeneID" id="69656"/>
<dbReference type="KEGG" id="mmu:69656"/>
<dbReference type="UCSC" id="uc009uvl.2">
    <property type="organism name" value="mouse"/>
</dbReference>
<dbReference type="AGR" id="MGI:1916906"/>
<dbReference type="CTD" id="8544"/>
<dbReference type="MGI" id="MGI:1916906">
    <property type="gene designation" value="Pir"/>
</dbReference>
<dbReference type="VEuPathDB" id="HostDB:ENSMUSG00000031379"/>
<dbReference type="eggNOG" id="ENOG502QQ5A">
    <property type="taxonomic scope" value="Eukaryota"/>
</dbReference>
<dbReference type="GeneTree" id="ENSGT00390000008044"/>
<dbReference type="HOGENOM" id="CLU_045717_0_1_1"/>
<dbReference type="InParanoid" id="Q9D711"/>
<dbReference type="OMA" id="TPWHPHR"/>
<dbReference type="OrthoDB" id="198735at2759"/>
<dbReference type="PhylomeDB" id="Q9D711"/>
<dbReference type="TreeFam" id="TF300002"/>
<dbReference type="Reactome" id="R-MMU-8935690">
    <property type="pathway name" value="Digestion"/>
</dbReference>
<dbReference type="UniPathway" id="UPA00724"/>
<dbReference type="BioGRID-ORCS" id="69656">
    <property type="hits" value="3 hits in 76 CRISPR screens"/>
</dbReference>
<dbReference type="ChiTaRS" id="Pir">
    <property type="organism name" value="mouse"/>
</dbReference>
<dbReference type="PRO" id="PR:Q9D711"/>
<dbReference type="Proteomes" id="UP000000589">
    <property type="component" value="Chromosome X"/>
</dbReference>
<dbReference type="RNAct" id="Q9D711">
    <property type="molecule type" value="protein"/>
</dbReference>
<dbReference type="Bgee" id="ENSMUSG00000031379">
    <property type="expression patterns" value="Expressed in esophagus and 192 other cell types or tissues"/>
</dbReference>
<dbReference type="ExpressionAtlas" id="Q9D711">
    <property type="expression patterns" value="baseline and differential"/>
</dbReference>
<dbReference type="GO" id="GO:0005737">
    <property type="term" value="C:cytoplasm"/>
    <property type="evidence" value="ECO:0000250"/>
    <property type="project" value="UniProtKB"/>
</dbReference>
<dbReference type="GO" id="GO:0005829">
    <property type="term" value="C:cytosol"/>
    <property type="evidence" value="ECO:0007669"/>
    <property type="project" value="Ensembl"/>
</dbReference>
<dbReference type="GO" id="GO:0016604">
    <property type="term" value="C:nuclear body"/>
    <property type="evidence" value="ECO:0007669"/>
    <property type="project" value="Ensembl"/>
</dbReference>
<dbReference type="GO" id="GO:0005634">
    <property type="term" value="C:nucleus"/>
    <property type="evidence" value="ECO:0000250"/>
    <property type="project" value="UniProtKB"/>
</dbReference>
<dbReference type="GO" id="GO:0046872">
    <property type="term" value="F:metal ion binding"/>
    <property type="evidence" value="ECO:0000250"/>
    <property type="project" value="UniProtKB"/>
</dbReference>
<dbReference type="GO" id="GO:0008127">
    <property type="term" value="F:quercetin 2,3-dioxygenase activity"/>
    <property type="evidence" value="ECO:0007669"/>
    <property type="project" value="UniProtKB-EC"/>
</dbReference>
<dbReference type="GO" id="GO:0003712">
    <property type="term" value="F:transcription coregulator activity"/>
    <property type="evidence" value="ECO:0000250"/>
    <property type="project" value="UniProtKB"/>
</dbReference>
<dbReference type="GO" id="GO:0030224">
    <property type="term" value="P:monocyte differentiation"/>
    <property type="evidence" value="ECO:0000266"/>
    <property type="project" value="MGI"/>
</dbReference>
<dbReference type="GO" id="GO:0030099">
    <property type="term" value="P:myeloid cell differentiation"/>
    <property type="evidence" value="ECO:0000315"/>
    <property type="project" value="MGI"/>
</dbReference>
<dbReference type="CDD" id="cd20288">
    <property type="entry name" value="cupin_pirin-like_C"/>
    <property type="match status" value="1"/>
</dbReference>
<dbReference type="CDD" id="cd02909">
    <property type="entry name" value="cupin_pirin_N"/>
    <property type="match status" value="1"/>
</dbReference>
<dbReference type="FunFam" id="2.60.120.10:FF:000055">
    <property type="entry name" value="pirin"/>
    <property type="match status" value="1"/>
</dbReference>
<dbReference type="Gene3D" id="2.60.120.10">
    <property type="entry name" value="Jelly Rolls"/>
    <property type="match status" value="2"/>
</dbReference>
<dbReference type="InterPro" id="IPR012093">
    <property type="entry name" value="Pirin"/>
</dbReference>
<dbReference type="InterPro" id="IPR008778">
    <property type="entry name" value="Pirin_C_dom"/>
</dbReference>
<dbReference type="InterPro" id="IPR003829">
    <property type="entry name" value="Pirin_N_dom"/>
</dbReference>
<dbReference type="InterPro" id="IPR014710">
    <property type="entry name" value="RmlC-like_jellyroll"/>
</dbReference>
<dbReference type="InterPro" id="IPR011051">
    <property type="entry name" value="RmlC_Cupin_sf"/>
</dbReference>
<dbReference type="PANTHER" id="PTHR13903:SF8">
    <property type="entry name" value="PIRIN"/>
    <property type="match status" value="1"/>
</dbReference>
<dbReference type="PANTHER" id="PTHR13903">
    <property type="entry name" value="PIRIN-RELATED"/>
    <property type="match status" value="1"/>
</dbReference>
<dbReference type="Pfam" id="PF02678">
    <property type="entry name" value="Pirin"/>
    <property type="match status" value="1"/>
</dbReference>
<dbReference type="Pfam" id="PF05726">
    <property type="entry name" value="Pirin_C"/>
    <property type="match status" value="1"/>
</dbReference>
<dbReference type="PIRSF" id="PIRSF006232">
    <property type="entry name" value="Pirin"/>
    <property type="match status" value="1"/>
</dbReference>
<dbReference type="SUPFAM" id="SSF51182">
    <property type="entry name" value="RmlC-like cupins"/>
    <property type="match status" value="1"/>
</dbReference>
<organism>
    <name type="scientific">Mus musculus</name>
    <name type="common">Mouse</name>
    <dbReference type="NCBI Taxonomy" id="10090"/>
    <lineage>
        <taxon>Eukaryota</taxon>
        <taxon>Metazoa</taxon>
        <taxon>Chordata</taxon>
        <taxon>Craniata</taxon>
        <taxon>Vertebrata</taxon>
        <taxon>Euteleostomi</taxon>
        <taxon>Mammalia</taxon>
        <taxon>Eutheria</taxon>
        <taxon>Euarchontoglires</taxon>
        <taxon>Glires</taxon>
        <taxon>Rodentia</taxon>
        <taxon>Myomorpha</taxon>
        <taxon>Muroidea</taxon>
        <taxon>Muridae</taxon>
        <taxon>Murinae</taxon>
        <taxon>Mus</taxon>
        <taxon>Mus</taxon>
    </lineage>
</organism>
<sequence>MASSKKVTLSVLSREQSEGVGARVRRSIGRPELKNLDPFLLFDEFKGGKPGGFPDHPHRGFETVSYLLEGGSMAHEDFCGHVGKMNPGDLQWMTAGRGILHAEMPCSEEPAHGLQLWVNLRRSEKMVAPQYQELKSEEIPKPTKDGVTVAVISGEALGIKSKVYTRTPTLYLDFKLDQGAKHSQPIPKGWTSFIYTISGDVYIGPDDAQQKIEPHHTAVLGEGDAVQLENKDPKRSHFVLIAGEPLREPVVQHGPFVMNTNEEISQAILDFRNAKNGFEGARTWKSKIGN</sequence>
<name>PIR_MOUSE</name>
<comment type="function">
    <text evidence="2">Transcriptional coregulator of NF-kappa-B which facilitates binding of NF-kappa-B proteins to target kappa-B genes in a redox-state-dependent manner. May be required for efficient terminal myeloid maturation of hematopoietic cells. Has quercetin 2,3-dioxygenase activity (in vitro).</text>
</comment>
<comment type="catalytic activity">
    <reaction evidence="2">
        <text>quercetin + O2 = 2-(3,4-dihydroxybenzoyloxy)-4,6-dihydroxybenzoate + CO</text>
        <dbReference type="Rhea" id="RHEA:15381"/>
        <dbReference type="ChEBI" id="CHEBI:15379"/>
        <dbReference type="ChEBI" id="CHEBI:17245"/>
        <dbReference type="ChEBI" id="CHEBI:57628"/>
        <dbReference type="ChEBI" id="CHEBI:57694"/>
        <dbReference type="EC" id="1.13.11.24"/>
    </reaction>
</comment>
<comment type="cofactor">
    <cofactor evidence="2">
        <name>Fe cation</name>
        <dbReference type="ChEBI" id="CHEBI:24875"/>
    </cofactor>
    <text evidence="2">Binds 1 Fe cation per subunit.</text>
</comment>
<comment type="pathway">
    <text evidence="2">Flavonoid metabolism; quercetin degradation.</text>
</comment>
<comment type="subunit">
    <text evidence="2">May interact with NF1/CTF1. Interacts with BCL3. Identified in a complex comprised of PIR, BLC3, NFKB1 and target DNA.</text>
</comment>
<comment type="subcellular location">
    <subcellularLocation>
        <location evidence="2">Nucleus</location>
    </subcellularLocation>
    <subcellularLocation>
        <location evidence="2">Cytoplasm</location>
    </subcellularLocation>
    <text evidence="2">Predominantly localized in dot-like subnuclear structures.</text>
</comment>
<comment type="tissue specificity">
    <text evidence="3">Weakly expressed in bone marrow.</text>
</comment>
<comment type="induction">
    <text evidence="3">Down-regulated in mice with acute myeloid leukemias induced by either PML-RAR or AML1-ETO fusion oncoproteins.</text>
</comment>
<comment type="miscellaneous">
    <text evidence="4">Quercetin is a flavonoid compound synthesized by a variety of plants, including foods for human consumption.</text>
</comment>
<comment type="similarity">
    <text evidence="4">Belongs to the pirin family.</text>
</comment>
<accession>Q9D711</accession>
<accession>A2AIH9</accession>
<accession>Q3UAN0</accession>
<accession>Q8CIE9</accession>
<keyword id="KW-0963">Cytoplasm</keyword>
<keyword id="KW-0223">Dioxygenase</keyword>
<keyword id="KW-0408">Iron</keyword>
<keyword id="KW-0479">Metal-binding</keyword>
<keyword id="KW-0539">Nucleus</keyword>
<keyword id="KW-0560">Oxidoreductase</keyword>
<keyword id="KW-1185">Reference proteome</keyword>
<keyword id="KW-0804">Transcription</keyword>
<keyword id="KW-0805">Transcription regulation</keyword>
<reference key="1">
    <citation type="journal article" date="2005" name="Science">
        <title>The transcriptional landscape of the mammalian genome.</title>
        <authorList>
            <person name="Carninci P."/>
            <person name="Kasukawa T."/>
            <person name="Katayama S."/>
            <person name="Gough J."/>
            <person name="Frith M.C."/>
            <person name="Maeda N."/>
            <person name="Oyama R."/>
            <person name="Ravasi T."/>
            <person name="Lenhard B."/>
            <person name="Wells C."/>
            <person name="Kodzius R."/>
            <person name="Shimokawa K."/>
            <person name="Bajic V.B."/>
            <person name="Brenner S.E."/>
            <person name="Batalov S."/>
            <person name="Forrest A.R."/>
            <person name="Zavolan M."/>
            <person name="Davis M.J."/>
            <person name="Wilming L.G."/>
            <person name="Aidinis V."/>
            <person name="Allen J.E."/>
            <person name="Ambesi-Impiombato A."/>
            <person name="Apweiler R."/>
            <person name="Aturaliya R.N."/>
            <person name="Bailey T.L."/>
            <person name="Bansal M."/>
            <person name="Baxter L."/>
            <person name="Beisel K.W."/>
            <person name="Bersano T."/>
            <person name="Bono H."/>
            <person name="Chalk A.M."/>
            <person name="Chiu K.P."/>
            <person name="Choudhary V."/>
            <person name="Christoffels A."/>
            <person name="Clutterbuck D.R."/>
            <person name="Crowe M.L."/>
            <person name="Dalla E."/>
            <person name="Dalrymple B.P."/>
            <person name="de Bono B."/>
            <person name="Della Gatta G."/>
            <person name="di Bernardo D."/>
            <person name="Down T."/>
            <person name="Engstrom P."/>
            <person name="Fagiolini M."/>
            <person name="Faulkner G."/>
            <person name="Fletcher C.F."/>
            <person name="Fukushima T."/>
            <person name="Furuno M."/>
            <person name="Futaki S."/>
            <person name="Gariboldi M."/>
            <person name="Georgii-Hemming P."/>
            <person name="Gingeras T.R."/>
            <person name="Gojobori T."/>
            <person name="Green R.E."/>
            <person name="Gustincich S."/>
            <person name="Harbers M."/>
            <person name="Hayashi Y."/>
            <person name="Hensch T.K."/>
            <person name="Hirokawa N."/>
            <person name="Hill D."/>
            <person name="Huminiecki L."/>
            <person name="Iacono M."/>
            <person name="Ikeo K."/>
            <person name="Iwama A."/>
            <person name="Ishikawa T."/>
            <person name="Jakt M."/>
            <person name="Kanapin A."/>
            <person name="Katoh M."/>
            <person name="Kawasawa Y."/>
            <person name="Kelso J."/>
            <person name="Kitamura H."/>
            <person name="Kitano H."/>
            <person name="Kollias G."/>
            <person name="Krishnan S.P."/>
            <person name="Kruger A."/>
            <person name="Kummerfeld S.K."/>
            <person name="Kurochkin I.V."/>
            <person name="Lareau L.F."/>
            <person name="Lazarevic D."/>
            <person name="Lipovich L."/>
            <person name="Liu J."/>
            <person name="Liuni S."/>
            <person name="McWilliam S."/>
            <person name="Madan Babu M."/>
            <person name="Madera M."/>
            <person name="Marchionni L."/>
            <person name="Matsuda H."/>
            <person name="Matsuzawa S."/>
            <person name="Miki H."/>
            <person name="Mignone F."/>
            <person name="Miyake S."/>
            <person name="Morris K."/>
            <person name="Mottagui-Tabar S."/>
            <person name="Mulder N."/>
            <person name="Nakano N."/>
            <person name="Nakauchi H."/>
            <person name="Ng P."/>
            <person name="Nilsson R."/>
            <person name="Nishiguchi S."/>
            <person name="Nishikawa S."/>
            <person name="Nori F."/>
            <person name="Ohara O."/>
            <person name="Okazaki Y."/>
            <person name="Orlando V."/>
            <person name="Pang K.C."/>
            <person name="Pavan W.J."/>
            <person name="Pavesi G."/>
            <person name="Pesole G."/>
            <person name="Petrovsky N."/>
            <person name="Piazza S."/>
            <person name="Reed J."/>
            <person name="Reid J.F."/>
            <person name="Ring B.Z."/>
            <person name="Ringwald M."/>
            <person name="Rost B."/>
            <person name="Ruan Y."/>
            <person name="Salzberg S.L."/>
            <person name="Sandelin A."/>
            <person name="Schneider C."/>
            <person name="Schoenbach C."/>
            <person name="Sekiguchi K."/>
            <person name="Semple C.A."/>
            <person name="Seno S."/>
            <person name="Sessa L."/>
            <person name="Sheng Y."/>
            <person name="Shibata Y."/>
            <person name="Shimada H."/>
            <person name="Shimada K."/>
            <person name="Silva D."/>
            <person name="Sinclair B."/>
            <person name="Sperling S."/>
            <person name="Stupka E."/>
            <person name="Sugiura K."/>
            <person name="Sultana R."/>
            <person name="Takenaka Y."/>
            <person name="Taki K."/>
            <person name="Tammoja K."/>
            <person name="Tan S.L."/>
            <person name="Tang S."/>
            <person name="Taylor M.S."/>
            <person name="Tegner J."/>
            <person name="Teichmann S.A."/>
            <person name="Ueda H.R."/>
            <person name="van Nimwegen E."/>
            <person name="Verardo R."/>
            <person name="Wei C.L."/>
            <person name="Yagi K."/>
            <person name="Yamanishi H."/>
            <person name="Zabarovsky E."/>
            <person name="Zhu S."/>
            <person name="Zimmer A."/>
            <person name="Hide W."/>
            <person name="Bult C."/>
            <person name="Grimmond S.M."/>
            <person name="Teasdale R.D."/>
            <person name="Liu E.T."/>
            <person name="Brusic V."/>
            <person name="Quackenbush J."/>
            <person name="Wahlestedt C."/>
            <person name="Mattick J.S."/>
            <person name="Hume D.A."/>
            <person name="Kai C."/>
            <person name="Sasaki D."/>
            <person name="Tomaru Y."/>
            <person name="Fukuda S."/>
            <person name="Kanamori-Katayama M."/>
            <person name="Suzuki M."/>
            <person name="Aoki J."/>
            <person name="Arakawa T."/>
            <person name="Iida J."/>
            <person name="Imamura K."/>
            <person name="Itoh M."/>
            <person name="Kato T."/>
            <person name="Kawaji H."/>
            <person name="Kawagashira N."/>
            <person name="Kawashima T."/>
            <person name="Kojima M."/>
            <person name="Kondo S."/>
            <person name="Konno H."/>
            <person name="Nakano K."/>
            <person name="Ninomiya N."/>
            <person name="Nishio T."/>
            <person name="Okada M."/>
            <person name="Plessy C."/>
            <person name="Shibata K."/>
            <person name="Shiraki T."/>
            <person name="Suzuki S."/>
            <person name="Tagami M."/>
            <person name="Waki K."/>
            <person name="Watahiki A."/>
            <person name="Okamura-Oho Y."/>
            <person name="Suzuki H."/>
            <person name="Kawai J."/>
            <person name="Hayashizaki Y."/>
        </authorList>
    </citation>
    <scope>NUCLEOTIDE SEQUENCE [LARGE SCALE MRNA]</scope>
    <source>
        <strain>C57BL/6J</strain>
        <tissue>Bone marrow</tissue>
        <tissue>Hypothalamus</tissue>
        <tissue>Tongue</tissue>
    </source>
</reference>
<reference key="2">
    <citation type="journal article" date="2009" name="PLoS Biol.">
        <title>Lineage-specific biology revealed by a finished genome assembly of the mouse.</title>
        <authorList>
            <person name="Church D.M."/>
            <person name="Goodstadt L."/>
            <person name="Hillier L.W."/>
            <person name="Zody M.C."/>
            <person name="Goldstein S."/>
            <person name="She X."/>
            <person name="Bult C.J."/>
            <person name="Agarwala R."/>
            <person name="Cherry J.L."/>
            <person name="DiCuccio M."/>
            <person name="Hlavina W."/>
            <person name="Kapustin Y."/>
            <person name="Meric P."/>
            <person name="Maglott D."/>
            <person name="Birtle Z."/>
            <person name="Marques A.C."/>
            <person name="Graves T."/>
            <person name="Zhou S."/>
            <person name="Teague B."/>
            <person name="Potamousis K."/>
            <person name="Churas C."/>
            <person name="Place M."/>
            <person name="Herschleb J."/>
            <person name="Runnheim R."/>
            <person name="Forrest D."/>
            <person name="Amos-Landgraf J."/>
            <person name="Schwartz D.C."/>
            <person name="Cheng Z."/>
            <person name="Lindblad-Toh K."/>
            <person name="Eichler E.E."/>
            <person name="Ponting C.P."/>
        </authorList>
    </citation>
    <scope>NUCLEOTIDE SEQUENCE [LARGE SCALE GENOMIC DNA]</scope>
    <source>
        <strain>C57BL/6J</strain>
    </source>
</reference>
<reference key="3">
    <citation type="submission" date="2005-09" db="EMBL/GenBank/DDBJ databases">
        <authorList>
            <person name="Mural R.J."/>
            <person name="Adams M.D."/>
            <person name="Myers E.W."/>
            <person name="Smith H.O."/>
            <person name="Venter J.C."/>
        </authorList>
    </citation>
    <scope>NUCLEOTIDE SEQUENCE [LARGE SCALE GENOMIC DNA]</scope>
</reference>
<reference key="4">
    <citation type="journal article" date="2004" name="Genome Res.">
        <title>The status, quality, and expansion of the NIH full-length cDNA project: the Mammalian Gene Collection (MGC).</title>
        <authorList>
            <consortium name="The MGC Project Team"/>
        </authorList>
    </citation>
    <scope>NUCLEOTIDE SEQUENCE [LARGE SCALE MRNA]</scope>
    <source>
        <strain>Czech II</strain>
        <tissue>Mammary tumor</tissue>
    </source>
</reference>
<reference key="5">
    <citation type="submission" date="2001-02" db="EMBL/GenBank/DDBJ databases">
        <title>Hypoxia upregulates VEGF-D promoter in pulmonary vascular smooth muscle cells.</title>
        <authorList>
            <person name="Teng X."/>
            <person name="Li D."/>
            <person name="Johns R.A."/>
        </authorList>
    </citation>
    <scope>NUCLEOTIDE SEQUENCE [GENOMIC DNA] OF 255-290</scope>
    <source>
        <strain>ICR</strain>
    </source>
</reference>
<reference key="6">
    <citation type="journal article" date="2010" name="Cell">
        <title>A tissue-specific atlas of mouse protein phosphorylation and expression.</title>
        <authorList>
            <person name="Huttlin E.L."/>
            <person name="Jedrychowski M.P."/>
            <person name="Elias J.E."/>
            <person name="Goswami T."/>
            <person name="Rad R."/>
            <person name="Beausoleil S.A."/>
            <person name="Villen J."/>
            <person name="Haas W."/>
            <person name="Sowa M.E."/>
            <person name="Gygi S.P."/>
        </authorList>
    </citation>
    <scope>IDENTIFICATION BY MASS SPECTROMETRY [LARGE SCALE ANALYSIS]</scope>
    <source>
        <tissue>Liver</tissue>
        <tissue>Lung</tissue>
        <tissue>Spleen</tissue>
    </source>
</reference>
<reference key="7">
    <citation type="journal article" date="2010" name="Leukemia">
        <title>Pirin downregulation is a feature of AML and leads to impairment of terminal myeloid differentiation.</title>
        <authorList>
            <person name="Licciulli S."/>
            <person name="Cambiaghi V."/>
            <person name="Scafetta G."/>
            <person name="Gruszka A.M."/>
            <person name="Alcalay M."/>
        </authorList>
    </citation>
    <scope>FUNCTION</scope>
    <scope>TISSUE SPECIFICITY</scope>
    <scope>INDUCTION</scope>
    <source>
        <strain>129/SvEv</strain>
    </source>
</reference>
<gene>
    <name type="primary">Pir</name>
</gene>
<proteinExistence type="evidence at protein level"/>
<feature type="chain" id="PRO_0000214052" description="Pirin">
    <location>
        <begin position="1"/>
        <end position="290"/>
    </location>
</feature>
<feature type="binding site" evidence="1">
    <location>
        <position position="56"/>
    </location>
    <ligand>
        <name>Fe cation</name>
        <dbReference type="ChEBI" id="CHEBI:24875"/>
    </ligand>
</feature>
<feature type="binding site" evidence="1">
    <location>
        <position position="58"/>
    </location>
    <ligand>
        <name>Fe cation</name>
        <dbReference type="ChEBI" id="CHEBI:24875"/>
    </ligand>
</feature>
<feature type="binding site" evidence="1">
    <location>
        <position position="101"/>
    </location>
    <ligand>
        <name>Fe cation</name>
        <dbReference type="ChEBI" id="CHEBI:24875"/>
    </ligand>
</feature>
<feature type="binding site" evidence="1">
    <location>
        <position position="103"/>
    </location>
    <ligand>
        <name>Fe cation</name>
        <dbReference type="ChEBI" id="CHEBI:24875"/>
    </ligand>
</feature>
<feature type="sequence conflict" description="In Ref. 2; AAH24062." evidence="4" ref="2">
    <original>K</original>
    <variation>R</variation>
    <location>
        <position position="49"/>
    </location>
</feature>